<feature type="chain" id="PRO_0000167947" description="Small ribosomal subunit protein bS20">
    <location>
        <begin position="1"/>
        <end position="98"/>
    </location>
</feature>
<feature type="region of interest" description="Disordered" evidence="2">
    <location>
        <begin position="1"/>
        <end position="31"/>
    </location>
</feature>
<feature type="compositionally biased region" description="Basic residues" evidence="2">
    <location>
        <begin position="1"/>
        <end position="12"/>
    </location>
</feature>
<reference key="1">
    <citation type="journal article" date="1998" name="Science">
        <title>Genome sequence of an obligate intracellular pathogen of humans: Chlamydia trachomatis.</title>
        <authorList>
            <person name="Stephens R.S."/>
            <person name="Kalman S."/>
            <person name="Lammel C.J."/>
            <person name="Fan J."/>
            <person name="Marathe R."/>
            <person name="Aravind L."/>
            <person name="Mitchell W.P."/>
            <person name="Olinger L."/>
            <person name="Tatusov R.L."/>
            <person name="Zhao Q."/>
            <person name="Koonin E.V."/>
            <person name="Davis R.W."/>
        </authorList>
    </citation>
    <scope>NUCLEOTIDE SEQUENCE [LARGE SCALE GENOMIC DNA]</scope>
    <source>
        <strain>ATCC VR-885 / DSM 19411 / UW-3/Cx</strain>
    </source>
</reference>
<keyword id="KW-1185">Reference proteome</keyword>
<keyword id="KW-0687">Ribonucleoprotein</keyword>
<keyword id="KW-0689">Ribosomal protein</keyword>
<keyword id="KW-0694">RNA-binding</keyword>
<keyword id="KW-0699">rRNA-binding</keyword>
<evidence type="ECO:0000255" key="1">
    <source>
        <dbReference type="HAMAP-Rule" id="MF_00500"/>
    </source>
</evidence>
<evidence type="ECO:0000256" key="2">
    <source>
        <dbReference type="SAM" id="MobiDB-lite"/>
    </source>
</evidence>
<evidence type="ECO:0000305" key="3"/>
<gene>
    <name evidence="1" type="primary">rpsT</name>
    <name type="synonym">rs20</name>
    <name type="ordered locus">CT_617</name>
</gene>
<accession>O84622</accession>
<name>RS20_CHLTR</name>
<proteinExistence type="inferred from homology"/>
<dbReference type="EMBL" id="AE001273">
    <property type="protein sequence ID" value="AAC68221.1"/>
    <property type="molecule type" value="Genomic_DNA"/>
</dbReference>
<dbReference type="PIR" id="A71492">
    <property type="entry name" value="A71492"/>
</dbReference>
<dbReference type="RefSeq" id="NP_220134.1">
    <property type="nucleotide sequence ID" value="NC_000117.1"/>
</dbReference>
<dbReference type="RefSeq" id="WP_009871985.1">
    <property type="nucleotide sequence ID" value="NC_000117.1"/>
</dbReference>
<dbReference type="SMR" id="O84622"/>
<dbReference type="FunCoup" id="O84622">
    <property type="interactions" value="200"/>
</dbReference>
<dbReference type="STRING" id="272561.CT_617"/>
<dbReference type="EnsemblBacteria" id="AAC68221">
    <property type="protein sequence ID" value="AAC68221"/>
    <property type="gene ID" value="CT_617"/>
</dbReference>
<dbReference type="GeneID" id="884412"/>
<dbReference type="KEGG" id="ctr:CT_617"/>
<dbReference type="PATRIC" id="fig|272561.5.peg.674"/>
<dbReference type="HOGENOM" id="CLU_160655_2_0_0"/>
<dbReference type="InParanoid" id="O84622"/>
<dbReference type="OrthoDB" id="21589at2"/>
<dbReference type="Proteomes" id="UP000000431">
    <property type="component" value="Chromosome"/>
</dbReference>
<dbReference type="GO" id="GO:0005829">
    <property type="term" value="C:cytosol"/>
    <property type="evidence" value="ECO:0000318"/>
    <property type="project" value="GO_Central"/>
</dbReference>
<dbReference type="GO" id="GO:0015935">
    <property type="term" value="C:small ribosomal subunit"/>
    <property type="evidence" value="ECO:0000318"/>
    <property type="project" value="GO_Central"/>
</dbReference>
<dbReference type="GO" id="GO:0070181">
    <property type="term" value="F:small ribosomal subunit rRNA binding"/>
    <property type="evidence" value="ECO:0000318"/>
    <property type="project" value="GO_Central"/>
</dbReference>
<dbReference type="GO" id="GO:0003735">
    <property type="term" value="F:structural constituent of ribosome"/>
    <property type="evidence" value="ECO:0007669"/>
    <property type="project" value="InterPro"/>
</dbReference>
<dbReference type="GO" id="GO:0006412">
    <property type="term" value="P:translation"/>
    <property type="evidence" value="ECO:0007669"/>
    <property type="project" value="UniProtKB-UniRule"/>
</dbReference>
<dbReference type="FunFam" id="1.20.58.110:FF:000006">
    <property type="entry name" value="30S ribosomal protein S20"/>
    <property type="match status" value="1"/>
</dbReference>
<dbReference type="Gene3D" id="1.20.58.110">
    <property type="entry name" value="Ribosomal protein S20"/>
    <property type="match status" value="1"/>
</dbReference>
<dbReference type="HAMAP" id="MF_00500">
    <property type="entry name" value="Ribosomal_bS20"/>
    <property type="match status" value="1"/>
</dbReference>
<dbReference type="InterPro" id="IPR002583">
    <property type="entry name" value="Ribosomal_bS20"/>
</dbReference>
<dbReference type="InterPro" id="IPR036510">
    <property type="entry name" value="Ribosomal_bS20_sf"/>
</dbReference>
<dbReference type="NCBIfam" id="TIGR00029">
    <property type="entry name" value="S20"/>
    <property type="match status" value="1"/>
</dbReference>
<dbReference type="PANTHER" id="PTHR33398">
    <property type="entry name" value="30S RIBOSOMAL PROTEIN S20"/>
    <property type="match status" value="1"/>
</dbReference>
<dbReference type="PANTHER" id="PTHR33398:SF1">
    <property type="entry name" value="SMALL RIBOSOMAL SUBUNIT PROTEIN BS20C"/>
    <property type="match status" value="1"/>
</dbReference>
<dbReference type="Pfam" id="PF01649">
    <property type="entry name" value="Ribosomal_S20p"/>
    <property type="match status" value="1"/>
</dbReference>
<dbReference type="SUPFAM" id="SSF46992">
    <property type="entry name" value="Ribosomal protein S20"/>
    <property type="match status" value="1"/>
</dbReference>
<sequence>MAPRKPSKKVGPQKRPSAEKRVITSKKKQLRNQSFKSKVRTILKKFELAVQSGDVESISAGLRSVYSIADKAVKRGIFKKGKADRVKSRTSERACPAA</sequence>
<organism>
    <name type="scientific">Chlamydia trachomatis serovar D (strain ATCC VR-885 / DSM 19411 / UW-3/Cx)</name>
    <dbReference type="NCBI Taxonomy" id="272561"/>
    <lineage>
        <taxon>Bacteria</taxon>
        <taxon>Pseudomonadati</taxon>
        <taxon>Chlamydiota</taxon>
        <taxon>Chlamydiia</taxon>
        <taxon>Chlamydiales</taxon>
        <taxon>Chlamydiaceae</taxon>
        <taxon>Chlamydia/Chlamydophila group</taxon>
        <taxon>Chlamydia</taxon>
    </lineage>
</organism>
<comment type="function">
    <text evidence="1">Binds directly to 16S ribosomal RNA.</text>
</comment>
<comment type="similarity">
    <text evidence="1">Belongs to the bacterial ribosomal protein bS20 family.</text>
</comment>
<protein>
    <recommendedName>
        <fullName evidence="1">Small ribosomal subunit protein bS20</fullName>
    </recommendedName>
    <alternativeName>
        <fullName evidence="3">30S ribosomal protein S20</fullName>
    </alternativeName>
</protein>